<reference key="1">
    <citation type="journal article" date="2005" name="Proc. Natl. Acad. Sci. U.S.A.">
        <title>The psychrophilic lifestyle as revealed by the genome sequence of Colwellia psychrerythraea 34H through genomic and proteomic analyses.</title>
        <authorList>
            <person name="Methe B.A."/>
            <person name="Nelson K.E."/>
            <person name="Deming J.W."/>
            <person name="Momen B."/>
            <person name="Melamud E."/>
            <person name="Zhang X."/>
            <person name="Moult J."/>
            <person name="Madupu R."/>
            <person name="Nelson W.C."/>
            <person name="Dodson R.J."/>
            <person name="Brinkac L.M."/>
            <person name="Daugherty S.C."/>
            <person name="Durkin A.S."/>
            <person name="DeBoy R.T."/>
            <person name="Kolonay J.F."/>
            <person name="Sullivan S.A."/>
            <person name="Zhou L."/>
            <person name="Davidsen T.M."/>
            <person name="Wu M."/>
            <person name="Huston A.L."/>
            <person name="Lewis M."/>
            <person name="Weaver B."/>
            <person name="Weidman J.F."/>
            <person name="Khouri H."/>
            <person name="Utterback T.R."/>
            <person name="Feldblyum T.V."/>
            <person name="Fraser C.M."/>
        </authorList>
    </citation>
    <scope>NUCLEOTIDE SEQUENCE [LARGE SCALE GENOMIC DNA]</scope>
    <source>
        <strain>34H / ATCC BAA-681</strain>
    </source>
</reference>
<sequence>MILLIDIGNSRTKYVQLISGELSATTQLNNSEFSAEYFTKYFNQASQLIVANVAKSALTDELATWCAREKISYKQVHSEQKKNTLISAYQEPTTLGIDRWLALLGTIHLYPQENVLIIDAGTATTVDLLTSNGQHQGGWILAGINALFTSILSHSTLVHAKSKTMPSLAFGANTSDNVNNACWAATLGMIERAIEQAQQLGDINRIILTGGDGKALTRLLLAQTTENILAVENIQFIDNLIFFGLQEYA</sequence>
<name>COAX_COLP3</name>
<dbReference type="EC" id="2.7.1.33" evidence="1"/>
<dbReference type="EMBL" id="CP000083">
    <property type="protein sequence ID" value="AAZ26906.1"/>
    <property type="molecule type" value="Genomic_DNA"/>
</dbReference>
<dbReference type="RefSeq" id="WP_011045469.1">
    <property type="nucleotide sequence ID" value="NC_003910.7"/>
</dbReference>
<dbReference type="SMR" id="Q47UY4"/>
<dbReference type="STRING" id="167879.CPS_4744"/>
<dbReference type="KEGG" id="cps:CPS_4744"/>
<dbReference type="HOGENOM" id="CLU_066627_0_1_6"/>
<dbReference type="UniPathway" id="UPA00241">
    <property type="reaction ID" value="UER00352"/>
</dbReference>
<dbReference type="Proteomes" id="UP000000547">
    <property type="component" value="Chromosome"/>
</dbReference>
<dbReference type="GO" id="GO:0005737">
    <property type="term" value="C:cytoplasm"/>
    <property type="evidence" value="ECO:0007669"/>
    <property type="project" value="UniProtKB-SubCell"/>
</dbReference>
<dbReference type="GO" id="GO:0005524">
    <property type="term" value="F:ATP binding"/>
    <property type="evidence" value="ECO:0007669"/>
    <property type="project" value="UniProtKB-UniRule"/>
</dbReference>
<dbReference type="GO" id="GO:0046872">
    <property type="term" value="F:metal ion binding"/>
    <property type="evidence" value="ECO:0007669"/>
    <property type="project" value="UniProtKB-KW"/>
</dbReference>
<dbReference type="GO" id="GO:0004594">
    <property type="term" value="F:pantothenate kinase activity"/>
    <property type="evidence" value="ECO:0007669"/>
    <property type="project" value="UniProtKB-UniRule"/>
</dbReference>
<dbReference type="GO" id="GO:0015937">
    <property type="term" value="P:coenzyme A biosynthetic process"/>
    <property type="evidence" value="ECO:0007669"/>
    <property type="project" value="UniProtKB-UniRule"/>
</dbReference>
<dbReference type="CDD" id="cd24015">
    <property type="entry name" value="ASKHA_NBD_PanK-III"/>
    <property type="match status" value="1"/>
</dbReference>
<dbReference type="Gene3D" id="3.30.420.40">
    <property type="match status" value="2"/>
</dbReference>
<dbReference type="HAMAP" id="MF_01274">
    <property type="entry name" value="Pantothen_kinase_3"/>
    <property type="match status" value="1"/>
</dbReference>
<dbReference type="InterPro" id="IPR043129">
    <property type="entry name" value="ATPase_NBD"/>
</dbReference>
<dbReference type="InterPro" id="IPR004619">
    <property type="entry name" value="Type_III_PanK"/>
</dbReference>
<dbReference type="NCBIfam" id="TIGR00671">
    <property type="entry name" value="baf"/>
    <property type="match status" value="1"/>
</dbReference>
<dbReference type="NCBIfam" id="NF009860">
    <property type="entry name" value="PRK13322.1-5"/>
    <property type="match status" value="1"/>
</dbReference>
<dbReference type="PANTHER" id="PTHR34265">
    <property type="entry name" value="TYPE III PANTOTHENATE KINASE"/>
    <property type="match status" value="1"/>
</dbReference>
<dbReference type="PANTHER" id="PTHR34265:SF1">
    <property type="entry name" value="TYPE III PANTOTHENATE KINASE"/>
    <property type="match status" value="1"/>
</dbReference>
<dbReference type="Pfam" id="PF03309">
    <property type="entry name" value="Pan_kinase"/>
    <property type="match status" value="1"/>
</dbReference>
<dbReference type="SUPFAM" id="SSF53067">
    <property type="entry name" value="Actin-like ATPase domain"/>
    <property type="match status" value="2"/>
</dbReference>
<comment type="function">
    <text evidence="1">Catalyzes the phosphorylation of pantothenate (Pan), the first step in CoA biosynthesis.</text>
</comment>
<comment type="catalytic activity">
    <reaction evidence="1">
        <text>(R)-pantothenate + ATP = (R)-4'-phosphopantothenate + ADP + H(+)</text>
        <dbReference type="Rhea" id="RHEA:16373"/>
        <dbReference type="ChEBI" id="CHEBI:10986"/>
        <dbReference type="ChEBI" id="CHEBI:15378"/>
        <dbReference type="ChEBI" id="CHEBI:29032"/>
        <dbReference type="ChEBI" id="CHEBI:30616"/>
        <dbReference type="ChEBI" id="CHEBI:456216"/>
        <dbReference type="EC" id="2.7.1.33"/>
    </reaction>
</comment>
<comment type="cofactor">
    <cofactor evidence="1">
        <name>NH4(+)</name>
        <dbReference type="ChEBI" id="CHEBI:28938"/>
    </cofactor>
    <cofactor evidence="1">
        <name>K(+)</name>
        <dbReference type="ChEBI" id="CHEBI:29103"/>
    </cofactor>
    <text evidence="1">A monovalent cation. Ammonium or potassium.</text>
</comment>
<comment type="pathway">
    <text evidence="1">Cofactor biosynthesis; coenzyme A biosynthesis; CoA from (R)-pantothenate: step 1/5.</text>
</comment>
<comment type="subunit">
    <text evidence="1">Homodimer.</text>
</comment>
<comment type="subcellular location">
    <subcellularLocation>
        <location evidence="1">Cytoplasm</location>
    </subcellularLocation>
</comment>
<comment type="similarity">
    <text evidence="1">Belongs to the type III pantothenate kinase family.</text>
</comment>
<organism>
    <name type="scientific">Colwellia psychrerythraea (strain 34H / ATCC BAA-681)</name>
    <name type="common">Vibrio psychroerythus</name>
    <dbReference type="NCBI Taxonomy" id="167879"/>
    <lineage>
        <taxon>Bacteria</taxon>
        <taxon>Pseudomonadati</taxon>
        <taxon>Pseudomonadota</taxon>
        <taxon>Gammaproteobacteria</taxon>
        <taxon>Alteromonadales</taxon>
        <taxon>Colwelliaceae</taxon>
        <taxon>Colwellia</taxon>
    </lineage>
</organism>
<feature type="chain" id="PRO_0000270873" description="Type III pantothenate kinase">
    <location>
        <begin position="1"/>
        <end position="249"/>
    </location>
</feature>
<feature type="active site" description="Proton acceptor" evidence="1">
    <location>
        <position position="98"/>
    </location>
</feature>
<feature type="binding site" evidence="1">
    <location>
        <begin position="6"/>
        <end position="13"/>
    </location>
    <ligand>
        <name>ATP</name>
        <dbReference type="ChEBI" id="CHEBI:30616"/>
    </ligand>
</feature>
<feature type="binding site" evidence="1">
    <location>
        <position position="89"/>
    </location>
    <ligand>
        <name>substrate</name>
    </ligand>
</feature>
<feature type="binding site" evidence="1">
    <location>
        <begin position="96"/>
        <end position="99"/>
    </location>
    <ligand>
        <name>substrate</name>
    </ligand>
</feature>
<feature type="binding site" evidence="1">
    <location>
        <position position="119"/>
    </location>
    <ligand>
        <name>K(+)</name>
        <dbReference type="ChEBI" id="CHEBI:29103"/>
    </ligand>
</feature>
<feature type="binding site" evidence="1">
    <location>
        <position position="122"/>
    </location>
    <ligand>
        <name>ATP</name>
        <dbReference type="ChEBI" id="CHEBI:30616"/>
    </ligand>
</feature>
<feature type="binding site" evidence="1">
    <location>
        <position position="174"/>
    </location>
    <ligand>
        <name>substrate</name>
    </ligand>
</feature>
<gene>
    <name evidence="1" type="primary">coaX</name>
    <name type="ordered locus">CPS_4744</name>
</gene>
<evidence type="ECO:0000255" key="1">
    <source>
        <dbReference type="HAMAP-Rule" id="MF_01274"/>
    </source>
</evidence>
<keyword id="KW-0067">ATP-binding</keyword>
<keyword id="KW-0173">Coenzyme A biosynthesis</keyword>
<keyword id="KW-0963">Cytoplasm</keyword>
<keyword id="KW-0418">Kinase</keyword>
<keyword id="KW-0479">Metal-binding</keyword>
<keyword id="KW-0547">Nucleotide-binding</keyword>
<keyword id="KW-0630">Potassium</keyword>
<keyword id="KW-0808">Transferase</keyword>
<protein>
    <recommendedName>
        <fullName evidence="1">Type III pantothenate kinase</fullName>
        <ecNumber evidence="1">2.7.1.33</ecNumber>
    </recommendedName>
    <alternativeName>
        <fullName evidence="1">PanK-III</fullName>
    </alternativeName>
    <alternativeName>
        <fullName evidence="1">Pantothenic acid kinase</fullName>
    </alternativeName>
</protein>
<proteinExistence type="inferred from homology"/>
<accession>Q47UY4</accession>